<name>HYH_ARATH</name>
<sequence length="149" mass="16899">MSLQRPNGNSSSSSSHKKHKTEESDEELLMVPDMEAAGSTCVLSSSADDGVNNPELDQTQNGVSTAKRRRGRNPVDKEYRSLKRLLRNRVSAQQARERKKVYVSDLESRANELQNNNDQLEEKISTLTNENTMLRKMLINTRPKTDDNH</sequence>
<proteinExistence type="evidence at protein level"/>
<keyword id="KW-0002">3D-structure</keyword>
<keyword id="KW-0010">Activator</keyword>
<keyword id="KW-0025">Alternative splicing</keyword>
<keyword id="KW-0238">DNA-binding</keyword>
<keyword id="KW-0539">Nucleus</keyword>
<keyword id="KW-0597">Phosphoprotein</keyword>
<keyword id="KW-0607">Phytochrome signaling pathway</keyword>
<keyword id="KW-1185">Reference proteome</keyword>
<keyword id="KW-0804">Transcription</keyword>
<keyword id="KW-0805">Transcription regulation</keyword>
<keyword id="KW-0832">Ubl conjugation</keyword>
<protein>
    <recommendedName>
        <fullName>Transcription factor HY5-like</fullName>
    </recommendedName>
    <alternativeName>
        <fullName>HY5 homolog</fullName>
    </alternativeName>
    <alternativeName>
        <fullName evidence="6">bZIP transcription factor 64</fullName>
        <shortName evidence="6">AtbZIP64</shortName>
    </alternativeName>
</protein>
<organism>
    <name type="scientific">Arabidopsis thaliana</name>
    <name type="common">Mouse-ear cress</name>
    <dbReference type="NCBI Taxonomy" id="3702"/>
    <lineage>
        <taxon>Eukaryota</taxon>
        <taxon>Viridiplantae</taxon>
        <taxon>Streptophyta</taxon>
        <taxon>Embryophyta</taxon>
        <taxon>Tracheophyta</taxon>
        <taxon>Spermatophyta</taxon>
        <taxon>Magnoliopsida</taxon>
        <taxon>eudicotyledons</taxon>
        <taxon>Gunneridae</taxon>
        <taxon>Pentapetalae</taxon>
        <taxon>rosids</taxon>
        <taxon>malvids</taxon>
        <taxon>Brassicales</taxon>
        <taxon>Brassicaceae</taxon>
        <taxon>Camelineae</taxon>
        <taxon>Arabidopsis</taxon>
    </lineage>
</organism>
<gene>
    <name type="primary">HYH</name>
    <name evidence="6" type="synonym">BZIP64</name>
    <name type="ordered locus">At3g17609</name>
    <name type="ORF">MKP6.27</name>
</gene>
<accession>Q8W191</accession>
<accession>Q8LB41</accession>
<accession>Q9LUN6</accession>
<reference key="1">
    <citation type="journal article" date="2002" name="Genes Dev.">
        <title>Two interacting bZIP proteins are direct targets of COP1-mediated control of light-dependent gene expression in Arabidopsis.</title>
        <authorList>
            <person name="Holm M."/>
            <person name="Ma L.-G."/>
            <person name="Qu L.-J."/>
            <person name="Deng X.-W."/>
        </authorList>
    </citation>
    <scope>NUCLEOTIDE SEQUENCE [MRNA] (ISOFORM 1)</scope>
    <scope>FUNCTION</scope>
    <scope>SUBCELLULAR LOCATION</scope>
    <scope>DNA-BINDING</scope>
    <scope>DEGRADATION</scope>
    <scope>HETERODIMERIZATION</scope>
    <scope>INTERACTION WITH COP1</scope>
    <scope>MUTAGENESIS OF 31-VAL-PRO-32</scope>
</reference>
<reference key="2">
    <citation type="journal article" date="2000" name="DNA Res.">
        <title>Structural analysis of Arabidopsis thaliana chromosome 3. I. Sequence features of the regions of 4,504,864 bp covered by sixty P1 and TAC clones.</title>
        <authorList>
            <person name="Sato S."/>
            <person name="Nakamura Y."/>
            <person name="Kaneko T."/>
            <person name="Katoh T."/>
            <person name="Asamizu E."/>
            <person name="Tabata S."/>
        </authorList>
    </citation>
    <scope>NUCLEOTIDE SEQUENCE [LARGE SCALE GENOMIC DNA]</scope>
    <source>
        <strain>cv. Columbia</strain>
    </source>
</reference>
<reference key="3">
    <citation type="journal article" date="2017" name="Plant J.">
        <title>Araport11: a complete reannotation of the Arabidopsis thaliana reference genome.</title>
        <authorList>
            <person name="Cheng C.Y."/>
            <person name="Krishnakumar V."/>
            <person name="Chan A.P."/>
            <person name="Thibaud-Nissen F."/>
            <person name="Schobel S."/>
            <person name="Town C.D."/>
        </authorList>
    </citation>
    <scope>GENOME REANNOTATION</scope>
    <source>
        <strain>cv. Columbia</strain>
    </source>
</reference>
<reference key="4">
    <citation type="submission" date="2002-03" db="EMBL/GenBank/DDBJ databases">
        <title>Full-length cDNA from Arabidopsis thaliana.</title>
        <authorList>
            <person name="Brover V.V."/>
            <person name="Troukhan M.E."/>
            <person name="Alexandrov N.A."/>
            <person name="Lu Y.-P."/>
            <person name="Flavell R.B."/>
            <person name="Feldmann K.A."/>
        </authorList>
    </citation>
    <scope>NUCLEOTIDE SEQUENCE [LARGE SCALE MRNA] (ISOFORM 2)</scope>
</reference>
<reference key="5">
    <citation type="submission" date="2004-09" db="EMBL/GenBank/DDBJ databases">
        <title>Large-scale analysis of RIKEN Arabidopsis full-length (RAFL) cDNAs.</title>
        <authorList>
            <person name="Totoki Y."/>
            <person name="Seki M."/>
            <person name="Ishida J."/>
            <person name="Nakajima M."/>
            <person name="Enju A."/>
            <person name="Kamiya A."/>
            <person name="Narusaka M."/>
            <person name="Shin-i T."/>
            <person name="Nakagawa M."/>
            <person name="Sakamoto N."/>
            <person name="Oishi K."/>
            <person name="Kohara Y."/>
            <person name="Kobayashi M."/>
            <person name="Toyoda A."/>
            <person name="Sakaki Y."/>
            <person name="Sakurai T."/>
            <person name="Iida K."/>
            <person name="Akiyama K."/>
            <person name="Satou M."/>
            <person name="Toyoda T."/>
            <person name="Konagaya A."/>
            <person name="Carninci P."/>
            <person name="Kawai J."/>
            <person name="Hayashizaki Y."/>
            <person name="Shinozaki K."/>
        </authorList>
    </citation>
    <scope>NUCLEOTIDE SEQUENCE [LARGE SCALE MRNA] (ISOFORM 1)</scope>
    <source>
        <strain>cv. Columbia</strain>
    </source>
</reference>
<reference key="6">
    <citation type="journal article" date="2002" name="Trends Plant Sci.">
        <title>bZIP transcription factors in Arabidopsis.</title>
        <authorList>
            <person name="Jakoby M."/>
            <person name="Weisshaar B."/>
            <person name="Droege-Laser W."/>
            <person name="Vicente-Carbajosa J."/>
            <person name="Tiedemann J."/>
            <person name="Kroj T."/>
            <person name="Parcy F."/>
        </authorList>
    </citation>
    <scope>GENE FAMILY</scope>
    <scope>NOMENCLATURE</scope>
</reference>
<reference key="7">
    <citation type="journal article" date="2013" name="Plant Signal. Behav.">
        <title>Molecular interactions of BBX24 and BBX25 with HYH, HY5 HOMOLOG, to modulate Arabidopsis seedling development.</title>
        <authorList>
            <person name="Gangappa S.N."/>
            <person name="Holm M."/>
            <person name="Botto J.F."/>
        </authorList>
    </citation>
    <scope>INTERACTION WITH BBX24/STO AND BBX25/STH</scope>
</reference>
<feature type="chain" id="PRO_0000076562" description="Transcription factor HY5-like">
    <location>
        <begin position="1"/>
        <end position="149"/>
    </location>
</feature>
<feature type="domain" description="bZIP" evidence="2">
    <location>
        <begin position="78"/>
        <end position="141"/>
    </location>
</feature>
<feature type="region of interest" description="Disordered" evidence="3">
    <location>
        <begin position="1"/>
        <end position="77"/>
    </location>
</feature>
<feature type="region of interest" description="Interaction with COP1" evidence="4">
    <location>
        <begin position="23"/>
        <end position="36"/>
    </location>
</feature>
<feature type="region of interest" description="Basic motif" evidence="2">
    <location>
        <begin position="80"/>
        <end position="100"/>
    </location>
</feature>
<feature type="region of interest" description="Leucine-zipper" evidence="2">
    <location>
        <begin position="106"/>
        <end position="134"/>
    </location>
</feature>
<feature type="compositionally biased region" description="Polar residues" evidence="3">
    <location>
        <begin position="55"/>
        <end position="64"/>
    </location>
</feature>
<feature type="modified residue" description="Phosphoserine" evidence="1">
    <location>
        <position position="24"/>
    </location>
</feature>
<feature type="splice variant" id="VSP_012011" description="In isoform 2." evidence="7">
    <location>
        <begin position="22"/>
        <end position="35"/>
    </location>
</feature>
<feature type="mutagenesis site" description="Abolishes interaction with COP1." evidence="4">
    <original>VP</original>
    <variation>AA</variation>
    <location>
        <begin position="31"/>
        <end position="32"/>
    </location>
</feature>
<comment type="function">
    <text evidence="4">Transcription factor that promotes photomorphogenesis in light. Acts downstream of the light receptor network and directly affects transcription of light-induced genes. Specifically involved in the blue light specific pathway, suggesting that it participates in transmission of cryptochromes (CRY1 and CRY2) signals to downstream responses. In darkness, its degradation prevents the activation of light-induced genes.</text>
</comment>
<comment type="subunit">
    <text evidence="4 5">Heterodimer; heterodimerizes with HY5 via the leucine-zipper domains. Interacts with COP1 WD40 domain (PubMed:12023303). Interacts with BBX24/STO and BBX25/STH (PubMed:23733077).</text>
</comment>
<comment type="interaction">
    <interactant intactId="EBI-11463635">
        <id>Q8W191-1</id>
    </interactant>
    <interactant intactId="EBI-301649">
        <id>P43254</id>
        <label>COP1</label>
    </interactant>
    <organismsDiffer>false</organismsDiffer>
    <experiments>3</experiments>
</comment>
<comment type="subcellular location">
    <subcellularLocation>
        <location evidence="2 4">Nucleus</location>
    </subcellularLocation>
</comment>
<comment type="alternative products">
    <event type="alternative splicing"/>
    <isoform>
        <id>Q8W191-1</id>
        <name>1</name>
        <sequence type="displayed"/>
    </isoform>
    <isoform>
        <id>Q8W191-2</id>
        <name>2</name>
        <sequence type="described" ref="VSP_012011"/>
    </isoform>
</comment>
<comment type="PTM">
    <text>Ubiquitinated by COP1. Ubiquitination takes place in darkness and leads to its subsequent degradation, thereby preventing the activation of photomorphogenesis signals.</text>
</comment>
<comment type="similarity">
    <text evidence="8">Belongs to the bZIP family.</text>
</comment>
<comment type="sequence caution" evidence="8">
    <conflict type="erroneous gene model prediction">
        <sequence resource="EMBL-CDS" id="BAB02051"/>
    </conflict>
    <text>The predicted gene At3g17610 has been split into 2 genes: At3g17609 and At3g17611.</text>
</comment>
<dbReference type="EMBL" id="AF453477">
    <property type="protein sequence ID" value="AAL57834.1"/>
    <property type="molecule type" value="mRNA"/>
</dbReference>
<dbReference type="EMBL" id="AB022219">
    <property type="protein sequence ID" value="BAB02051.1"/>
    <property type="status" value="ALT_SEQ"/>
    <property type="molecule type" value="Genomic_DNA"/>
</dbReference>
<dbReference type="EMBL" id="CP002686">
    <property type="protein sequence ID" value="AEE75974.1"/>
    <property type="molecule type" value="Genomic_DNA"/>
</dbReference>
<dbReference type="EMBL" id="CP002686">
    <property type="protein sequence ID" value="AEE75975.1"/>
    <property type="molecule type" value="Genomic_DNA"/>
</dbReference>
<dbReference type="EMBL" id="AY087436">
    <property type="protein sequence ID" value="AAM64982.1"/>
    <property type="molecule type" value="mRNA"/>
</dbReference>
<dbReference type="EMBL" id="AK175440">
    <property type="protein sequence ID" value="BAD43203.1"/>
    <property type="molecule type" value="mRNA"/>
</dbReference>
<dbReference type="EMBL" id="AK175523">
    <property type="protein sequence ID" value="BAD43286.1"/>
    <property type="molecule type" value="mRNA"/>
</dbReference>
<dbReference type="RefSeq" id="NP_850604.1">
    <molecule id="Q8W191-2"/>
    <property type="nucleotide sequence ID" value="NM_180273.2"/>
</dbReference>
<dbReference type="RefSeq" id="NP_850605.1">
    <molecule id="Q8W191-1"/>
    <property type="nucleotide sequence ID" value="NM_180274.3"/>
</dbReference>
<dbReference type="PDB" id="6QTT">
    <property type="method" value="X-ray"/>
    <property type="resolution" value="1.51 A"/>
    <property type="chains" value="B=27-35"/>
</dbReference>
<dbReference type="PDBsum" id="6QTT"/>
<dbReference type="SMR" id="Q8W191"/>
<dbReference type="BioGRID" id="6360">
    <property type="interactions" value="16"/>
</dbReference>
<dbReference type="FunCoup" id="Q8W191">
    <property type="interactions" value="110"/>
</dbReference>
<dbReference type="IntAct" id="Q8W191">
    <property type="interactions" value="3"/>
</dbReference>
<dbReference type="MINT" id="Q8W191"/>
<dbReference type="STRING" id="3702.Q8W191"/>
<dbReference type="PaxDb" id="3702-AT3G17609.2"/>
<dbReference type="ProteomicsDB" id="232180">
    <molecule id="Q8W191-1"/>
</dbReference>
<dbReference type="EnsemblPlants" id="AT3G17609.1">
    <molecule id="Q8W191-2"/>
    <property type="protein sequence ID" value="AT3G17609.1"/>
    <property type="gene ID" value="AT3G17609"/>
</dbReference>
<dbReference type="EnsemblPlants" id="AT3G17609.2">
    <molecule id="Q8W191-1"/>
    <property type="protein sequence ID" value="AT3G17609.2"/>
    <property type="gene ID" value="AT3G17609"/>
</dbReference>
<dbReference type="GeneID" id="821027"/>
<dbReference type="Gramene" id="AT3G17609.1">
    <molecule id="Q8W191-2"/>
    <property type="protein sequence ID" value="AT3G17609.1"/>
    <property type="gene ID" value="AT3G17609"/>
</dbReference>
<dbReference type="Gramene" id="AT3G17609.2">
    <molecule id="Q8W191-1"/>
    <property type="protein sequence ID" value="AT3G17609.2"/>
    <property type="gene ID" value="AT3G17609"/>
</dbReference>
<dbReference type="KEGG" id="ath:AT3G17609"/>
<dbReference type="Araport" id="AT3G17609"/>
<dbReference type="TAIR" id="AT3G17609">
    <property type="gene designation" value="HYH"/>
</dbReference>
<dbReference type="eggNOG" id="KOG1414">
    <property type="taxonomic scope" value="Eukaryota"/>
</dbReference>
<dbReference type="InParanoid" id="Q8W191"/>
<dbReference type="OMA" id="RKVIMNT"/>
<dbReference type="OrthoDB" id="674948at2759"/>
<dbReference type="PhylomeDB" id="Q8W191"/>
<dbReference type="PRO" id="PR:Q8W191"/>
<dbReference type="Proteomes" id="UP000006548">
    <property type="component" value="Chromosome 3"/>
</dbReference>
<dbReference type="ExpressionAtlas" id="Q8W191">
    <property type="expression patterns" value="baseline and differential"/>
</dbReference>
<dbReference type="GO" id="GO:0005634">
    <property type="term" value="C:nucleus"/>
    <property type="evidence" value="ECO:0007669"/>
    <property type="project" value="UniProtKB-SubCell"/>
</dbReference>
<dbReference type="GO" id="GO:0003700">
    <property type="term" value="F:DNA-binding transcription factor activity"/>
    <property type="evidence" value="ECO:0000250"/>
    <property type="project" value="TAIR"/>
</dbReference>
<dbReference type="GO" id="GO:0000981">
    <property type="term" value="F:DNA-binding transcription factor activity, RNA polymerase II-specific"/>
    <property type="evidence" value="ECO:0007669"/>
    <property type="project" value="InterPro"/>
</dbReference>
<dbReference type="GO" id="GO:0000976">
    <property type="term" value="F:transcription cis-regulatory region binding"/>
    <property type="evidence" value="ECO:0000353"/>
    <property type="project" value="TAIR"/>
</dbReference>
<dbReference type="GO" id="GO:0045944">
    <property type="term" value="P:positive regulation of transcription by RNA polymerase II"/>
    <property type="evidence" value="ECO:0007669"/>
    <property type="project" value="InterPro"/>
</dbReference>
<dbReference type="GO" id="GO:0009585">
    <property type="term" value="P:red, far-red light phototransduction"/>
    <property type="evidence" value="ECO:0007669"/>
    <property type="project" value="UniProtKB-KW"/>
</dbReference>
<dbReference type="GO" id="GO:0010224">
    <property type="term" value="P:response to UV-B"/>
    <property type="evidence" value="ECO:0000270"/>
    <property type="project" value="TAIR"/>
</dbReference>
<dbReference type="CDD" id="cd14704">
    <property type="entry name" value="bZIP_HY5-like"/>
    <property type="match status" value="1"/>
</dbReference>
<dbReference type="Gene3D" id="1.20.5.490">
    <property type="entry name" value="Single helix bin"/>
    <property type="match status" value="1"/>
</dbReference>
<dbReference type="InterPro" id="IPR004827">
    <property type="entry name" value="bZIP"/>
</dbReference>
<dbReference type="InterPro" id="IPR046347">
    <property type="entry name" value="bZIP_sf"/>
</dbReference>
<dbReference type="InterPro" id="IPR044280">
    <property type="entry name" value="Hac1/HY5"/>
</dbReference>
<dbReference type="PANTHER" id="PTHR46714:SF5">
    <property type="entry name" value="TRANSCRIPTION FACTOR HY5-LIKE"/>
    <property type="match status" value="1"/>
</dbReference>
<dbReference type="PANTHER" id="PTHR46714">
    <property type="entry name" value="TRANSCRIPTIONAL ACTIVATOR HAC1"/>
    <property type="match status" value="1"/>
</dbReference>
<dbReference type="Pfam" id="PF00170">
    <property type="entry name" value="bZIP_1"/>
    <property type="match status" value="1"/>
</dbReference>
<dbReference type="SMART" id="SM00338">
    <property type="entry name" value="BRLZ"/>
    <property type="match status" value="1"/>
</dbReference>
<dbReference type="SUPFAM" id="SSF57959">
    <property type="entry name" value="Leucine zipper domain"/>
    <property type="match status" value="1"/>
</dbReference>
<dbReference type="PROSITE" id="PS50217">
    <property type="entry name" value="BZIP"/>
    <property type="match status" value="1"/>
</dbReference>
<dbReference type="PROSITE" id="PS00036">
    <property type="entry name" value="BZIP_BASIC"/>
    <property type="match status" value="1"/>
</dbReference>
<evidence type="ECO:0000250" key="1">
    <source>
        <dbReference type="UniProtKB" id="O24646"/>
    </source>
</evidence>
<evidence type="ECO:0000255" key="2">
    <source>
        <dbReference type="PROSITE-ProRule" id="PRU00978"/>
    </source>
</evidence>
<evidence type="ECO:0000256" key="3">
    <source>
        <dbReference type="SAM" id="MobiDB-lite"/>
    </source>
</evidence>
<evidence type="ECO:0000269" key="4">
    <source>
    </source>
</evidence>
<evidence type="ECO:0000269" key="5">
    <source>
    </source>
</evidence>
<evidence type="ECO:0000303" key="6">
    <source>
    </source>
</evidence>
<evidence type="ECO:0000303" key="7">
    <source ref="4"/>
</evidence>
<evidence type="ECO:0000305" key="8"/>